<evidence type="ECO:0000255" key="1"/>
<evidence type="ECO:0000305" key="2"/>
<sequence length="115" mass="13219">MKLDISVKYLLKSLIPILIILTVFYLGWKDNQENARMFYAFIGCIISAITFPFSMRIIQKMVIRFTGKEFWQKDFFTNPVGGSLTAIFELFCFVISVPVVAIYLIFILCKALSGK</sequence>
<accession>P08702</accession>
<keyword id="KW-0079">Bacteriocin immunity</keyword>
<keyword id="KW-1003">Cell membrane</keyword>
<keyword id="KW-0472">Membrane</keyword>
<keyword id="KW-0614">Plasmid</keyword>
<keyword id="KW-0812">Transmembrane</keyword>
<keyword id="KW-1133">Transmembrane helix</keyword>
<comment type="function">
    <text>This protein is able to protect a cell, which harbors the plasmid IncI1 ColIb-P9 encoding colicin Ib, against colicin Ib.</text>
</comment>
<comment type="subcellular location">
    <subcellularLocation>
        <location evidence="2">Cell membrane</location>
        <topology evidence="2">Multi-pass membrane protein</topology>
    </subcellularLocation>
</comment>
<feature type="chain" id="PRO_0000218694" description="Colicin-Ib immunity protein">
    <location>
        <begin position="1"/>
        <end position="115"/>
    </location>
</feature>
<feature type="transmembrane region" description="Helical" evidence="1">
    <location>
        <begin position="7"/>
        <end position="27"/>
    </location>
</feature>
<feature type="transmembrane region" description="Helical" evidence="1">
    <location>
        <begin position="38"/>
        <end position="58"/>
    </location>
</feature>
<feature type="transmembrane region" description="Helical" evidence="1">
    <location>
        <begin position="87"/>
        <end position="107"/>
    </location>
</feature>
<protein>
    <recommendedName>
        <fullName>Colicin-Ib immunity protein</fullName>
    </recommendedName>
</protein>
<name>IMMJ_ECOLX</name>
<proteinExistence type="predicted"/>
<organism>
    <name type="scientific">Escherichia coli</name>
    <dbReference type="NCBI Taxonomy" id="562"/>
    <lineage>
        <taxon>Bacteria</taxon>
        <taxon>Pseudomonadati</taxon>
        <taxon>Pseudomonadota</taxon>
        <taxon>Gammaproteobacteria</taxon>
        <taxon>Enterobacterales</taxon>
        <taxon>Enterobacteriaceae</taxon>
        <taxon>Escherichia</taxon>
    </lineage>
</organism>
<dbReference type="EMBL" id="M13820">
    <property type="protein sequence ID" value="AAA23189.1"/>
    <property type="molecule type" value="Genomic_DNA"/>
</dbReference>
<dbReference type="PIR" id="F25035">
    <property type="entry name" value="F25035"/>
</dbReference>
<dbReference type="RefSeq" id="WP_000762570.1">
    <property type="nucleotide sequence ID" value="NZ_WVVM01000022.1"/>
</dbReference>
<dbReference type="RefSeq" id="YP_008998725.1">
    <property type="nucleotide sequence ID" value="NC_023329.1"/>
</dbReference>
<dbReference type="RefSeq" id="YP_009059982.1">
    <property type="nucleotide sequence ID" value="NC_024955.2"/>
</dbReference>
<dbReference type="RefSeq" id="YP_009061430.1">
    <property type="nucleotide sequence ID" value="NC_024978.1"/>
</dbReference>
<dbReference type="RefSeq" id="YP_009061563.1">
    <property type="nucleotide sequence ID" value="NC_024979.1"/>
</dbReference>
<dbReference type="RefSeq" id="YP_009061686.1">
    <property type="nucleotide sequence ID" value="NC_024980.1"/>
</dbReference>
<dbReference type="RefSeq" id="YP_009068748.1">
    <property type="nucleotide sequence ID" value="NC_025142.1"/>
</dbReference>
<dbReference type="RefSeq" id="YP_009068983.1">
    <property type="nucleotide sequence ID" value="NC_025143.1"/>
</dbReference>
<dbReference type="RefSeq" id="YP_009069104.1">
    <property type="nucleotide sequence ID" value="NC_025144.1"/>
</dbReference>
<dbReference type="RefSeq" id="YP_009070841.1">
    <property type="nucleotide sequence ID" value="NC_025176.1"/>
</dbReference>
<dbReference type="GeneID" id="39515141"/>
<dbReference type="GO" id="GO:0005886">
    <property type="term" value="C:plasma membrane"/>
    <property type="evidence" value="ECO:0007669"/>
    <property type="project" value="UniProtKB-SubCell"/>
</dbReference>
<dbReference type="GO" id="GO:0015643">
    <property type="term" value="F:toxic substance binding"/>
    <property type="evidence" value="ECO:0007669"/>
    <property type="project" value="InterPro"/>
</dbReference>
<dbReference type="GO" id="GO:0030153">
    <property type="term" value="P:bacteriocin immunity"/>
    <property type="evidence" value="ECO:0007669"/>
    <property type="project" value="UniProtKB-KW"/>
</dbReference>
<dbReference type="InterPro" id="IPR003061">
    <property type="entry name" value="Microcin"/>
</dbReference>
<dbReference type="Pfam" id="PF03526">
    <property type="entry name" value="Microcin"/>
    <property type="match status" value="1"/>
</dbReference>
<geneLocation type="plasmid">
    <name>IncI1 ColIb-P9</name>
</geneLocation>
<reference key="1">
    <citation type="journal article" date="1986" name="J. Bacteriol.">
        <title>DNA and amino acid sequence analysis of structural and immunity genes of colicins Ia and Ib.</title>
        <authorList>
            <person name="Mankovich J.A."/>
            <person name="Hsu C.-H."/>
            <person name="Konisky J."/>
        </authorList>
    </citation>
    <scope>NUCLEOTIDE SEQUENCE [GENOMIC DNA]</scope>
</reference>